<protein>
    <recommendedName>
        <fullName evidence="3">Small ribosomal subunit protein eS6z</fullName>
    </recommendedName>
    <alternativeName>
        <fullName>40S ribosomal protein S6-1</fullName>
    </alternativeName>
</protein>
<evidence type="ECO:0000250" key="1">
    <source>
        <dbReference type="UniProtKB" id="P62753"/>
    </source>
</evidence>
<evidence type="ECO:0000256" key="2">
    <source>
        <dbReference type="SAM" id="MobiDB-lite"/>
    </source>
</evidence>
<evidence type="ECO:0000303" key="3">
    <source>
    </source>
</evidence>
<evidence type="ECO:0000305" key="4"/>
<evidence type="ECO:0007744" key="5">
    <source>
    </source>
</evidence>
<accession>O48549</accession>
<accession>O81777</accession>
<keyword id="KW-0025">Alternative splicing</keyword>
<keyword id="KW-0597">Phosphoprotein</keyword>
<keyword id="KW-1185">Reference proteome</keyword>
<keyword id="KW-0687">Ribonucleoprotein</keyword>
<keyword id="KW-0689">Ribosomal protein</keyword>
<gene>
    <name type="primary">RPS6A</name>
    <name type="ordered locus">At4g31700</name>
    <name type="ORF">F28M20.110</name>
</gene>
<dbReference type="EMBL" id="AF034217">
    <property type="protein sequence ID" value="AAB88298.1"/>
    <property type="molecule type" value="mRNA"/>
</dbReference>
<dbReference type="EMBL" id="AL031004">
    <property type="protein sequence ID" value="CAA19753.1"/>
    <property type="molecule type" value="Genomic_DNA"/>
</dbReference>
<dbReference type="EMBL" id="AL161579">
    <property type="protein sequence ID" value="CAB79888.1"/>
    <property type="molecule type" value="Genomic_DNA"/>
</dbReference>
<dbReference type="EMBL" id="CP002687">
    <property type="protein sequence ID" value="AEE85946.1"/>
    <property type="molecule type" value="Genomic_DNA"/>
</dbReference>
<dbReference type="EMBL" id="AY050803">
    <property type="protein sequence ID" value="AAK92738.1"/>
    <property type="molecule type" value="mRNA"/>
</dbReference>
<dbReference type="EMBL" id="AY113983">
    <property type="protein sequence ID" value="AAM45031.1"/>
    <property type="molecule type" value="mRNA"/>
</dbReference>
<dbReference type="EMBL" id="BT000693">
    <property type="protein sequence ID" value="AAN31838.1"/>
    <property type="molecule type" value="mRNA"/>
</dbReference>
<dbReference type="PIR" id="T05100">
    <property type="entry name" value="T05100"/>
</dbReference>
<dbReference type="RefSeq" id="NP_194898.1">
    <molecule id="O48549-1"/>
    <property type="nucleotide sequence ID" value="NM_119319.5"/>
</dbReference>
<dbReference type="SMR" id="O48549"/>
<dbReference type="BioGRID" id="14584">
    <property type="interactions" value="129"/>
</dbReference>
<dbReference type="FunCoup" id="O48549">
    <property type="interactions" value="3563"/>
</dbReference>
<dbReference type="IntAct" id="O48549">
    <property type="interactions" value="2"/>
</dbReference>
<dbReference type="STRING" id="3702.O48549"/>
<dbReference type="iPTMnet" id="O48549"/>
<dbReference type="PaxDb" id="3702-AT4G31700.1"/>
<dbReference type="EnsemblPlants" id="AT4G31700.1">
    <molecule id="O48549-1"/>
    <property type="protein sequence ID" value="AT4G31700.1"/>
    <property type="gene ID" value="AT4G31700"/>
</dbReference>
<dbReference type="GeneID" id="829298"/>
<dbReference type="Gramene" id="AT4G31700.1">
    <molecule id="O48549-1"/>
    <property type="protein sequence ID" value="AT4G31700.1"/>
    <property type="gene ID" value="AT4G31700"/>
</dbReference>
<dbReference type="KEGG" id="ath:AT4G31700"/>
<dbReference type="Araport" id="AT4G31700"/>
<dbReference type="TAIR" id="AT4G31700">
    <property type="gene designation" value="RPS6"/>
</dbReference>
<dbReference type="eggNOG" id="KOG1646">
    <property type="taxonomic scope" value="Eukaryota"/>
</dbReference>
<dbReference type="HOGENOM" id="CLU_046346_0_1_1"/>
<dbReference type="InParanoid" id="O48549"/>
<dbReference type="OMA" id="FQEQIVK"/>
<dbReference type="OrthoDB" id="1901524at2759"/>
<dbReference type="PhylomeDB" id="O48549"/>
<dbReference type="CD-CODE" id="4299E36E">
    <property type="entry name" value="Nucleolus"/>
</dbReference>
<dbReference type="PRO" id="PR:O48549"/>
<dbReference type="Proteomes" id="UP000006548">
    <property type="component" value="Chromosome 4"/>
</dbReference>
<dbReference type="ExpressionAtlas" id="O48549">
    <property type="expression patterns" value="baseline and differential"/>
</dbReference>
<dbReference type="GO" id="GO:0022626">
    <property type="term" value="C:cytosolic ribosome"/>
    <property type="evidence" value="ECO:0007005"/>
    <property type="project" value="TAIR"/>
</dbReference>
<dbReference type="GO" id="GO:0022627">
    <property type="term" value="C:cytosolic small ribosomal subunit"/>
    <property type="evidence" value="ECO:0007005"/>
    <property type="project" value="TAIR"/>
</dbReference>
<dbReference type="GO" id="GO:0005730">
    <property type="term" value="C:nucleolus"/>
    <property type="evidence" value="ECO:0007005"/>
    <property type="project" value="TAIR"/>
</dbReference>
<dbReference type="GO" id="GO:0005886">
    <property type="term" value="C:plasma membrane"/>
    <property type="evidence" value="ECO:0007005"/>
    <property type="project" value="TAIR"/>
</dbReference>
<dbReference type="GO" id="GO:0009506">
    <property type="term" value="C:plasmodesma"/>
    <property type="evidence" value="ECO:0007005"/>
    <property type="project" value="TAIR"/>
</dbReference>
<dbReference type="GO" id="GO:0003729">
    <property type="term" value="F:mRNA binding"/>
    <property type="evidence" value="ECO:0000314"/>
    <property type="project" value="TAIR"/>
</dbReference>
<dbReference type="GO" id="GO:0003735">
    <property type="term" value="F:structural constituent of ribosome"/>
    <property type="evidence" value="ECO:0000314"/>
    <property type="project" value="CAFA"/>
</dbReference>
<dbReference type="GO" id="GO:0006412">
    <property type="term" value="P:translation"/>
    <property type="evidence" value="ECO:0007669"/>
    <property type="project" value="InterPro"/>
</dbReference>
<dbReference type="FunFam" id="1.20.5.2650:FF:000002">
    <property type="entry name" value="40S ribosomal protein S6"/>
    <property type="match status" value="1"/>
</dbReference>
<dbReference type="Gene3D" id="1.20.5.2650">
    <property type="match status" value="1"/>
</dbReference>
<dbReference type="InterPro" id="IPR001377">
    <property type="entry name" value="Ribosomal_eS6"/>
</dbReference>
<dbReference type="InterPro" id="IPR014401">
    <property type="entry name" value="Ribosomal_eS6-like"/>
</dbReference>
<dbReference type="PANTHER" id="PTHR11502">
    <property type="entry name" value="40S RIBOSOMAL PROTEIN S6"/>
    <property type="match status" value="1"/>
</dbReference>
<dbReference type="Pfam" id="PF01092">
    <property type="entry name" value="Ribosomal_S6e"/>
    <property type="match status" value="1"/>
</dbReference>
<dbReference type="PIRSF" id="PIRSF002129">
    <property type="entry name" value="Ribosom_S6_euk"/>
    <property type="match status" value="1"/>
</dbReference>
<dbReference type="SMART" id="SM01405">
    <property type="entry name" value="Ribosomal_S6e"/>
    <property type="match status" value="1"/>
</dbReference>
<name>RS61_ARATH</name>
<proteinExistence type="evidence at protein level"/>
<comment type="function">
    <text evidence="1">Component of the 40S small ribosomal subunit (By similarity). Plays an important role in controlling cell growth and proliferation through the selective translation of particular classes of mRNA (By similarity).</text>
</comment>
<comment type="alternative products">
    <event type="alternative splicing"/>
    <isoform>
        <id>O48549-1</id>
        <name>1</name>
        <sequence type="displayed"/>
    </isoform>
    <text>A number of isoforms are produced. According to EST sequences.</text>
</comment>
<comment type="PTM">
    <text evidence="1">Ribosomal protein S6 is the major substrate of protein kinases in eukaryote ribosomes.</text>
</comment>
<comment type="similarity">
    <text evidence="4">Belongs to the eukaryotic ribosomal protein eS6 family.</text>
</comment>
<sequence>MKFNVANPTTGCQKKLEIDDDQKLRAFYDKRISQEVSGDALGEEFKGYVFKIKGGCDKQGFPMKQGVLTPGRVRLLLHRGTPCFRGHGRRTGERRRKSVRGCIVSPDLSVLNLVIVKKGENDLPGLTDTEKPRMRGPKRASKIRKLFNLKKEDDVRTYVNTYRRKFTNKKGKEVSKAPKIQRLVTPLTLQRKRARIADKKKKIAKANSDAADYQKLLASRLKEQRDRRSESLAKKRSRLSSAAAKPSVTA</sequence>
<reference key="1">
    <citation type="submission" date="1997-11" db="EMBL/GenBank/DDBJ databases">
        <title>S6 ribosomal protein of Arabidopsis thaliana.</title>
        <authorList>
            <person name="Bonham-Smith P.C."/>
        </authorList>
    </citation>
    <scope>NUCLEOTIDE SEQUENCE [MRNA]</scope>
    <source>
        <strain>cv. Columbia</strain>
    </source>
</reference>
<reference key="2">
    <citation type="journal article" date="1999" name="Nature">
        <title>Sequence and analysis of chromosome 4 of the plant Arabidopsis thaliana.</title>
        <authorList>
            <person name="Mayer K.F.X."/>
            <person name="Schueller C."/>
            <person name="Wambutt R."/>
            <person name="Murphy G."/>
            <person name="Volckaert G."/>
            <person name="Pohl T."/>
            <person name="Duesterhoeft A."/>
            <person name="Stiekema W."/>
            <person name="Entian K.-D."/>
            <person name="Terryn N."/>
            <person name="Harris B."/>
            <person name="Ansorge W."/>
            <person name="Brandt P."/>
            <person name="Grivell L.A."/>
            <person name="Rieger M."/>
            <person name="Weichselgartner M."/>
            <person name="de Simone V."/>
            <person name="Obermaier B."/>
            <person name="Mache R."/>
            <person name="Mueller M."/>
            <person name="Kreis M."/>
            <person name="Delseny M."/>
            <person name="Puigdomenech P."/>
            <person name="Watson M."/>
            <person name="Schmidtheini T."/>
            <person name="Reichert B."/>
            <person name="Portetelle D."/>
            <person name="Perez-Alonso M."/>
            <person name="Boutry M."/>
            <person name="Bancroft I."/>
            <person name="Vos P."/>
            <person name="Hoheisel J."/>
            <person name="Zimmermann W."/>
            <person name="Wedler H."/>
            <person name="Ridley P."/>
            <person name="Langham S.-A."/>
            <person name="McCullagh B."/>
            <person name="Bilham L."/>
            <person name="Robben J."/>
            <person name="van der Schueren J."/>
            <person name="Grymonprez B."/>
            <person name="Chuang Y.-J."/>
            <person name="Vandenbussche F."/>
            <person name="Braeken M."/>
            <person name="Weltjens I."/>
            <person name="Voet M."/>
            <person name="Bastiaens I."/>
            <person name="Aert R."/>
            <person name="Defoor E."/>
            <person name="Weitzenegger T."/>
            <person name="Bothe G."/>
            <person name="Ramsperger U."/>
            <person name="Hilbert H."/>
            <person name="Braun M."/>
            <person name="Holzer E."/>
            <person name="Brandt A."/>
            <person name="Peters S."/>
            <person name="van Staveren M."/>
            <person name="Dirkse W."/>
            <person name="Mooijman P."/>
            <person name="Klein Lankhorst R."/>
            <person name="Rose M."/>
            <person name="Hauf J."/>
            <person name="Koetter P."/>
            <person name="Berneiser S."/>
            <person name="Hempel S."/>
            <person name="Feldpausch M."/>
            <person name="Lamberth S."/>
            <person name="Van den Daele H."/>
            <person name="De Keyser A."/>
            <person name="Buysshaert C."/>
            <person name="Gielen J."/>
            <person name="Villarroel R."/>
            <person name="De Clercq R."/>
            <person name="van Montagu M."/>
            <person name="Rogers J."/>
            <person name="Cronin A."/>
            <person name="Quail M.A."/>
            <person name="Bray-Allen S."/>
            <person name="Clark L."/>
            <person name="Doggett J."/>
            <person name="Hall S."/>
            <person name="Kay M."/>
            <person name="Lennard N."/>
            <person name="McLay K."/>
            <person name="Mayes R."/>
            <person name="Pettett A."/>
            <person name="Rajandream M.A."/>
            <person name="Lyne M."/>
            <person name="Benes V."/>
            <person name="Rechmann S."/>
            <person name="Borkova D."/>
            <person name="Bloecker H."/>
            <person name="Scharfe M."/>
            <person name="Grimm M."/>
            <person name="Loehnert T.-H."/>
            <person name="Dose S."/>
            <person name="de Haan M."/>
            <person name="Maarse A.C."/>
            <person name="Schaefer M."/>
            <person name="Mueller-Auer S."/>
            <person name="Gabel C."/>
            <person name="Fuchs M."/>
            <person name="Fartmann B."/>
            <person name="Granderath K."/>
            <person name="Dauner D."/>
            <person name="Herzl A."/>
            <person name="Neumann S."/>
            <person name="Argiriou A."/>
            <person name="Vitale D."/>
            <person name="Liguori R."/>
            <person name="Piravandi E."/>
            <person name="Massenet O."/>
            <person name="Quigley F."/>
            <person name="Clabauld G."/>
            <person name="Muendlein A."/>
            <person name="Felber R."/>
            <person name="Schnabl S."/>
            <person name="Hiller R."/>
            <person name="Schmidt W."/>
            <person name="Lecharny A."/>
            <person name="Aubourg S."/>
            <person name="Chefdor F."/>
            <person name="Cooke R."/>
            <person name="Berger C."/>
            <person name="Monfort A."/>
            <person name="Casacuberta E."/>
            <person name="Gibbons T."/>
            <person name="Weber N."/>
            <person name="Vandenbol M."/>
            <person name="Bargues M."/>
            <person name="Terol J."/>
            <person name="Torres A."/>
            <person name="Perez-Perez A."/>
            <person name="Purnelle B."/>
            <person name="Bent E."/>
            <person name="Johnson S."/>
            <person name="Tacon D."/>
            <person name="Jesse T."/>
            <person name="Heijnen L."/>
            <person name="Schwarz S."/>
            <person name="Scholler P."/>
            <person name="Heber S."/>
            <person name="Francs P."/>
            <person name="Bielke C."/>
            <person name="Frishman D."/>
            <person name="Haase D."/>
            <person name="Lemcke K."/>
            <person name="Mewes H.-W."/>
            <person name="Stocker S."/>
            <person name="Zaccaria P."/>
            <person name="Bevan M."/>
            <person name="Wilson R.K."/>
            <person name="de la Bastide M."/>
            <person name="Habermann K."/>
            <person name="Parnell L."/>
            <person name="Dedhia N."/>
            <person name="Gnoj L."/>
            <person name="Schutz K."/>
            <person name="Huang E."/>
            <person name="Spiegel L."/>
            <person name="Sekhon M."/>
            <person name="Murray J."/>
            <person name="Sheet P."/>
            <person name="Cordes M."/>
            <person name="Abu-Threideh J."/>
            <person name="Stoneking T."/>
            <person name="Kalicki J."/>
            <person name="Graves T."/>
            <person name="Harmon G."/>
            <person name="Edwards J."/>
            <person name="Latreille P."/>
            <person name="Courtney L."/>
            <person name="Cloud J."/>
            <person name="Abbott A."/>
            <person name="Scott K."/>
            <person name="Johnson D."/>
            <person name="Minx P."/>
            <person name="Bentley D."/>
            <person name="Fulton B."/>
            <person name="Miller N."/>
            <person name="Greco T."/>
            <person name="Kemp K."/>
            <person name="Kramer J."/>
            <person name="Fulton L."/>
            <person name="Mardis E."/>
            <person name="Dante M."/>
            <person name="Pepin K."/>
            <person name="Hillier L.W."/>
            <person name="Nelson J."/>
            <person name="Spieth J."/>
            <person name="Ryan E."/>
            <person name="Andrews S."/>
            <person name="Geisel C."/>
            <person name="Layman D."/>
            <person name="Du H."/>
            <person name="Ali J."/>
            <person name="Berghoff A."/>
            <person name="Jones K."/>
            <person name="Drone K."/>
            <person name="Cotton M."/>
            <person name="Joshu C."/>
            <person name="Antonoiu B."/>
            <person name="Zidanic M."/>
            <person name="Strong C."/>
            <person name="Sun H."/>
            <person name="Lamar B."/>
            <person name="Yordan C."/>
            <person name="Ma P."/>
            <person name="Zhong J."/>
            <person name="Preston R."/>
            <person name="Vil D."/>
            <person name="Shekher M."/>
            <person name="Matero A."/>
            <person name="Shah R."/>
            <person name="Swaby I.K."/>
            <person name="O'Shaughnessy A."/>
            <person name="Rodriguez M."/>
            <person name="Hoffman J."/>
            <person name="Till S."/>
            <person name="Granat S."/>
            <person name="Shohdy N."/>
            <person name="Hasegawa A."/>
            <person name="Hameed A."/>
            <person name="Lodhi M."/>
            <person name="Johnson A."/>
            <person name="Chen E."/>
            <person name="Marra M.A."/>
            <person name="Martienssen R."/>
            <person name="McCombie W.R."/>
        </authorList>
    </citation>
    <scope>NUCLEOTIDE SEQUENCE [LARGE SCALE GENOMIC DNA]</scope>
    <source>
        <strain>cv. Columbia</strain>
    </source>
</reference>
<reference key="3">
    <citation type="journal article" date="2017" name="Plant J.">
        <title>Araport11: a complete reannotation of the Arabidopsis thaliana reference genome.</title>
        <authorList>
            <person name="Cheng C.Y."/>
            <person name="Krishnakumar V."/>
            <person name="Chan A.P."/>
            <person name="Thibaud-Nissen F."/>
            <person name="Schobel S."/>
            <person name="Town C.D."/>
        </authorList>
    </citation>
    <scope>GENOME REANNOTATION</scope>
    <source>
        <strain>cv. Columbia</strain>
    </source>
</reference>
<reference key="4">
    <citation type="journal article" date="2003" name="Science">
        <title>Empirical analysis of transcriptional activity in the Arabidopsis genome.</title>
        <authorList>
            <person name="Yamada K."/>
            <person name="Lim J."/>
            <person name="Dale J.M."/>
            <person name="Chen H."/>
            <person name="Shinn P."/>
            <person name="Palm C.J."/>
            <person name="Southwick A.M."/>
            <person name="Wu H.C."/>
            <person name="Kim C.J."/>
            <person name="Nguyen M."/>
            <person name="Pham P.K."/>
            <person name="Cheuk R.F."/>
            <person name="Karlin-Newmann G."/>
            <person name="Liu S.X."/>
            <person name="Lam B."/>
            <person name="Sakano H."/>
            <person name="Wu T."/>
            <person name="Yu G."/>
            <person name="Miranda M."/>
            <person name="Quach H.L."/>
            <person name="Tripp M."/>
            <person name="Chang C.H."/>
            <person name="Lee J.M."/>
            <person name="Toriumi M.J."/>
            <person name="Chan M.M."/>
            <person name="Tang C.C."/>
            <person name="Onodera C.S."/>
            <person name="Deng J.M."/>
            <person name="Akiyama K."/>
            <person name="Ansari Y."/>
            <person name="Arakawa T."/>
            <person name="Banh J."/>
            <person name="Banno F."/>
            <person name="Bowser L."/>
            <person name="Brooks S.Y."/>
            <person name="Carninci P."/>
            <person name="Chao Q."/>
            <person name="Choy N."/>
            <person name="Enju A."/>
            <person name="Goldsmith A.D."/>
            <person name="Gurjal M."/>
            <person name="Hansen N.F."/>
            <person name="Hayashizaki Y."/>
            <person name="Johnson-Hopson C."/>
            <person name="Hsuan V.W."/>
            <person name="Iida K."/>
            <person name="Karnes M."/>
            <person name="Khan S."/>
            <person name="Koesema E."/>
            <person name="Ishida J."/>
            <person name="Jiang P.X."/>
            <person name="Jones T."/>
            <person name="Kawai J."/>
            <person name="Kamiya A."/>
            <person name="Meyers C."/>
            <person name="Nakajima M."/>
            <person name="Narusaka M."/>
            <person name="Seki M."/>
            <person name="Sakurai T."/>
            <person name="Satou M."/>
            <person name="Tamse R."/>
            <person name="Vaysberg M."/>
            <person name="Wallender E.K."/>
            <person name="Wong C."/>
            <person name="Yamamura Y."/>
            <person name="Yuan S."/>
            <person name="Shinozaki K."/>
            <person name="Davis R.W."/>
            <person name="Theologis A."/>
            <person name="Ecker J.R."/>
        </authorList>
    </citation>
    <scope>NUCLEOTIDE SEQUENCE [LARGE SCALE MRNA]</scope>
    <source>
        <strain>cv. Columbia</strain>
    </source>
</reference>
<reference key="5">
    <citation type="journal article" date="2001" name="Plant Physiol.">
        <title>The organization of cytoplasmic ribosomal protein genes in the Arabidopsis genome.</title>
        <authorList>
            <person name="Barakat A."/>
            <person name="Szick-Miranda K."/>
            <person name="Chang I.-F."/>
            <person name="Guyot R."/>
            <person name="Blanc G."/>
            <person name="Cooke R."/>
            <person name="Delseny M."/>
            <person name="Bailey-Serres J."/>
        </authorList>
    </citation>
    <scope>GENE FAMILY ORGANIZATION</scope>
    <scope>NOMENCLATURE</scope>
</reference>
<reference key="6">
    <citation type="journal article" date="2009" name="J. Proteomics">
        <title>Phosphoproteomic analysis of nuclei-enriched fractions from Arabidopsis thaliana.</title>
        <authorList>
            <person name="Jones A.M.E."/>
            <person name="MacLean D."/>
            <person name="Studholme D.J."/>
            <person name="Serna-Sanz A."/>
            <person name="Andreasson E."/>
            <person name="Rathjen J.P."/>
            <person name="Peck S.C."/>
        </authorList>
    </citation>
    <scope>IDENTIFICATION BY MASS SPECTROMETRY [LARGE SCALE ANALYSIS]</scope>
    <source>
        <strain>cv. Columbia</strain>
    </source>
</reference>
<reference key="7">
    <citation type="journal article" date="2009" name="Plant Physiol.">
        <title>Large-scale Arabidopsis phosphoproteome profiling reveals novel chloroplast kinase substrates and phosphorylation networks.</title>
        <authorList>
            <person name="Reiland S."/>
            <person name="Messerli G."/>
            <person name="Baerenfaller K."/>
            <person name="Gerrits B."/>
            <person name="Endler A."/>
            <person name="Grossmann J."/>
            <person name="Gruissem W."/>
            <person name="Baginsky S."/>
        </authorList>
    </citation>
    <scope>PHOSPHORYLATION [LARGE SCALE ANALYSIS] AT SER-237 AND SER-247</scope>
    <scope>IDENTIFICATION BY MASS SPECTROMETRY [LARGE SCALE ANALYSIS]</scope>
</reference>
<reference key="8">
    <citation type="journal article" date="2023" name="Plant Cell">
        <title>An updated nomenclature for plant ribosomal protein genes.</title>
        <authorList>
            <person name="Scarpin M.R."/>
            <person name="Busche M."/>
            <person name="Martinez R.E."/>
            <person name="Harper L.C."/>
            <person name="Reiser L."/>
            <person name="Szakonyi D."/>
            <person name="Merchante C."/>
            <person name="Lan T."/>
            <person name="Xiong W."/>
            <person name="Mo B."/>
            <person name="Tang G."/>
            <person name="Chen X."/>
            <person name="Bailey-Serres J."/>
            <person name="Browning K.S."/>
            <person name="Brunkard J.O."/>
        </authorList>
    </citation>
    <scope>NOMENCLATURE</scope>
</reference>
<feature type="chain" id="PRO_0000137329" description="Small ribosomal subunit protein eS6z">
    <location>
        <begin position="1"/>
        <end position="250"/>
    </location>
</feature>
<feature type="region of interest" description="Disordered" evidence="2">
    <location>
        <begin position="220"/>
        <end position="250"/>
    </location>
</feature>
<feature type="compositionally biased region" description="Basic and acidic residues" evidence="2">
    <location>
        <begin position="220"/>
        <end position="233"/>
    </location>
</feature>
<feature type="compositionally biased region" description="Low complexity" evidence="2">
    <location>
        <begin position="239"/>
        <end position="250"/>
    </location>
</feature>
<feature type="modified residue" description="Phosphoserine" evidence="5">
    <location>
        <position position="237"/>
    </location>
</feature>
<feature type="modified residue" description="Phosphoserine" evidence="5">
    <location>
        <position position="247"/>
    </location>
</feature>
<feature type="sequence conflict" description="In Ref. 1; AAB88298." evidence="4" ref="1">
    <original>TEKPR</original>
    <variation>HESK</variation>
    <location>
        <begin position="129"/>
        <end position="133"/>
    </location>
</feature>
<feature type="sequence conflict" description="In Ref. 1; AAB88298." evidence="4" ref="1">
    <original>K</original>
    <variation>E</variation>
    <location>
        <position position="235"/>
    </location>
</feature>
<organism>
    <name type="scientific">Arabidopsis thaliana</name>
    <name type="common">Mouse-ear cress</name>
    <dbReference type="NCBI Taxonomy" id="3702"/>
    <lineage>
        <taxon>Eukaryota</taxon>
        <taxon>Viridiplantae</taxon>
        <taxon>Streptophyta</taxon>
        <taxon>Embryophyta</taxon>
        <taxon>Tracheophyta</taxon>
        <taxon>Spermatophyta</taxon>
        <taxon>Magnoliopsida</taxon>
        <taxon>eudicotyledons</taxon>
        <taxon>Gunneridae</taxon>
        <taxon>Pentapetalae</taxon>
        <taxon>rosids</taxon>
        <taxon>malvids</taxon>
        <taxon>Brassicales</taxon>
        <taxon>Brassicaceae</taxon>
        <taxon>Camelineae</taxon>
        <taxon>Arabidopsis</taxon>
    </lineage>
</organism>